<organism>
    <name type="scientific">Staphylococcus aureus (strain MW2)</name>
    <dbReference type="NCBI Taxonomy" id="196620"/>
    <lineage>
        <taxon>Bacteria</taxon>
        <taxon>Bacillati</taxon>
        <taxon>Bacillota</taxon>
        <taxon>Bacilli</taxon>
        <taxon>Bacillales</taxon>
        <taxon>Staphylococcaceae</taxon>
        <taxon>Staphylococcus</taxon>
    </lineage>
</organism>
<proteinExistence type="inferred from homology"/>
<keyword id="KW-1003">Cell membrane</keyword>
<keyword id="KW-0449">Lipoprotein</keyword>
<keyword id="KW-0472">Membrane</keyword>
<keyword id="KW-0564">Palmitate</keyword>
<keyword id="KW-0732">Signal</keyword>
<accession>Q8NUV6</accession>
<reference key="1">
    <citation type="journal article" date="2002" name="Lancet">
        <title>Genome and virulence determinants of high virulence community-acquired MRSA.</title>
        <authorList>
            <person name="Baba T."/>
            <person name="Takeuchi F."/>
            <person name="Kuroda M."/>
            <person name="Yuzawa H."/>
            <person name="Aoki K."/>
            <person name="Oguchi A."/>
            <person name="Nagai Y."/>
            <person name="Iwama N."/>
            <person name="Asano K."/>
            <person name="Naimi T."/>
            <person name="Kuroda H."/>
            <person name="Cui L."/>
            <person name="Yamamoto K."/>
            <person name="Hiramatsu K."/>
        </authorList>
    </citation>
    <scope>NUCLEOTIDE SEQUENCE [LARGE SCALE GENOMIC DNA]</scope>
    <source>
        <strain>MW2</strain>
    </source>
</reference>
<dbReference type="EMBL" id="BA000033">
    <property type="protein sequence ID" value="BAB96273.1"/>
    <property type="status" value="ALT_INIT"/>
    <property type="molecule type" value="Genomic_DNA"/>
</dbReference>
<dbReference type="RefSeq" id="WP_000581910.1">
    <property type="nucleotide sequence ID" value="NC_003923.1"/>
</dbReference>
<dbReference type="SMR" id="Q8NUV6"/>
<dbReference type="KEGG" id="sam:MW2408"/>
<dbReference type="HOGENOM" id="CLU_071589_0_1_9"/>
<dbReference type="GO" id="GO:0005886">
    <property type="term" value="C:plasma membrane"/>
    <property type="evidence" value="ECO:0007669"/>
    <property type="project" value="UniProtKB-SubCell"/>
</dbReference>
<dbReference type="Gene3D" id="2.50.20.40">
    <property type="match status" value="1"/>
</dbReference>
<dbReference type="InterPro" id="IPR007595">
    <property type="entry name" value="Csa"/>
</dbReference>
<dbReference type="InterPro" id="IPR038641">
    <property type="entry name" value="Csa_sf"/>
</dbReference>
<dbReference type="NCBIfam" id="TIGR01742">
    <property type="entry name" value="SA_tandem_lipo"/>
    <property type="match status" value="1"/>
</dbReference>
<dbReference type="Pfam" id="PF04507">
    <property type="entry name" value="DUF576"/>
    <property type="match status" value="1"/>
</dbReference>
<dbReference type="PROSITE" id="PS51257">
    <property type="entry name" value="PROKAR_LIPOPROTEIN"/>
    <property type="match status" value="1"/>
</dbReference>
<sequence length="252" mass="29746">MIHSKRLRLWLYLVLLAVFISACGMKEDKQIKENFNKTLSLYPTKNLDDFYDKEGFRDQEFEKGDKGTWIVDSEMVVELKDKKMESRSMVLYINRNTRTTKGNFIVRELWEDSKGYAQSKDTKYPVKMEHNRIIPTKPIADDKLRKEIENFKFFVQYGDFKDINDYKDGDISYNPNVPSYSAEYQLSNNDYNVKQLRKRYDIPTKKAPKLLIKGDGDLKGSSIGHKNLEFTFVENKEENIYFTDSINFKPTK</sequence>
<protein>
    <recommendedName>
        <fullName>Uncharacterized lipoprotein MW2408</fullName>
    </recommendedName>
</protein>
<comment type="subcellular location">
    <subcellularLocation>
        <location evidence="1">Cell membrane</location>
        <topology evidence="1">Lipid-anchor</topology>
    </subcellularLocation>
</comment>
<comment type="similarity">
    <text evidence="2">Belongs to the staphylococcal tandem lipoprotein family.</text>
</comment>
<comment type="sequence caution" evidence="2">
    <conflict type="erroneous initiation">
        <sequence resource="EMBL-CDS" id="BAB96273"/>
    </conflict>
</comment>
<name>Y2408_STAAW</name>
<feature type="signal peptide" evidence="1">
    <location>
        <begin position="1"/>
        <end position="22"/>
    </location>
</feature>
<feature type="chain" id="PRO_0000282178" description="Uncharacterized lipoprotein MW2408">
    <location>
        <begin position="23"/>
        <end position="252"/>
    </location>
</feature>
<feature type="lipid moiety-binding region" description="N-palmitoyl cysteine" evidence="1">
    <location>
        <position position="23"/>
    </location>
</feature>
<feature type="lipid moiety-binding region" description="S-diacylglycerol cysteine" evidence="1">
    <location>
        <position position="23"/>
    </location>
</feature>
<gene>
    <name type="ordered locus">MW2408</name>
</gene>
<evidence type="ECO:0000255" key="1">
    <source>
        <dbReference type="PROSITE-ProRule" id="PRU00303"/>
    </source>
</evidence>
<evidence type="ECO:0000305" key="2"/>